<feature type="chain" id="PRO_0000342264" description="SHC-transforming protein 2">
    <location>
        <begin position="1"/>
        <end position="573"/>
    </location>
</feature>
<feature type="domain" description="PID" evidence="2">
    <location>
        <begin position="125"/>
        <end position="307"/>
    </location>
</feature>
<feature type="domain" description="SH2" evidence="3">
    <location>
        <begin position="478"/>
        <end position="569"/>
    </location>
</feature>
<organism>
    <name type="scientific">Rattus norvegicus</name>
    <name type="common">Rat</name>
    <dbReference type="NCBI Taxonomy" id="10116"/>
    <lineage>
        <taxon>Eukaryota</taxon>
        <taxon>Metazoa</taxon>
        <taxon>Chordata</taxon>
        <taxon>Craniata</taxon>
        <taxon>Vertebrata</taxon>
        <taxon>Euteleostomi</taxon>
        <taxon>Mammalia</taxon>
        <taxon>Eutheria</taxon>
        <taxon>Euarchontoglires</taxon>
        <taxon>Glires</taxon>
        <taxon>Rodentia</taxon>
        <taxon>Myomorpha</taxon>
        <taxon>Muroidea</taxon>
        <taxon>Muridae</taxon>
        <taxon>Murinae</taxon>
        <taxon>Rattus</taxon>
    </lineage>
</organism>
<gene>
    <name type="primary">Shc2</name>
    <name type="synonym">Sck</name>
</gene>
<proteinExistence type="evidence at transcript level"/>
<name>SHC2_RAT</name>
<comment type="function">
    <text evidence="1">Signaling adapter that couples activated growth factor receptors to signaling pathway in neurons. Involved in the signal transduction pathways of neurotrophin-activated Trk receptors in cortical neurons (By similarity).</text>
</comment>
<comment type="subunit">
    <text evidence="1">Interacts with the Trk receptors in a phosphotyrosine-dependent manner and MEGF12. Once activated, binds to GRB2 (By similarity).</text>
</comment>
<comment type="domain">
    <text evidence="1">The PID domain mediates binding to the TrkA receptor.</text>
</comment>
<comment type="PTM">
    <text evidence="1">Phosphorylated on tyrosine by the Trk receptors.</text>
</comment>
<keyword id="KW-0597">Phosphoprotein</keyword>
<keyword id="KW-1185">Reference proteome</keyword>
<keyword id="KW-0727">SH2 domain</keyword>
<dbReference type="EMBL" id="AABR03055985">
    <property type="status" value="NOT_ANNOTATED_CDS"/>
    <property type="molecule type" value="Genomic_DNA"/>
</dbReference>
<dbReference type="EMBL" id="AABR03059160">
    <property type="status" value="NOT_ANNOTATED_CDS"/>
    <property type="molecule type" value="Genomic_DNA"/>
</dbReference>
<dbReference type="EMBL" id="AB001452">
    <property type="protein sequence ID" value="BAA28173.1"/>
    <property type="molecule type" value="mRNA"/>
</dbReference>
<dbReference type="RefSeq" id="NP_001101535.1">
    <property type="nucleotide sequence ID" value="NM_001108065.1"/>
</dbReference>
<dbReference type="SMR" id="O70142"/>
<dbReference type="FunCoup" id="O70142">
    <property type="interactions" value="2155"/>
</dbReference>
<dbReference type="STRING" id="10116.ENSRNOP00000010714"/>
<dbReference type="iPTMnet" id="O70142"/>
<dbReference type="PhosphoSitePlus" id="O70142"/>
<dbReference type="PaxDb" id="10116-ENSRNOP00000010714"/>
<dbReference type="Ensembl" id="ENSRNOT00000010714.6">
    <property type="protein sequence ID" value="ENSRNOP00000010714.5"/>
    <property type="gene ID" value="ENSRNOG00000008030.6"/>
</dbReference>
<dbReference type="GeneID" id="314612"/>
<dbReference type="KEGG" id="rno:314612"/>
<dbReference type="UCSC" id="RGD:1307137">
    <property type="organism name" value="rat"/>
</dbReference>
<dbReference type="AGR" id="RGD:1307137"/>
<dbReference type="CTD" id="25759"/>
<dbReference type="RGD" id="1307137">
    <property type="gene designation" value="Shc2"/>
</dbReference>
<dbReference type="eggNOG" id="KOG3697">
    <property type="taxonomic scope" value="Eukaryota"/>
</dbReference>
<dbReference type="GeneTree" id="ENSGT00950000182870"/>
<dbReference type="HOGENOM" id="CLU_029532_2_0_1"/>
<dbReference type="InParanoid" id="O70142"/>
<dbReference type="OMA" id="GDEWSRK"/>
<dbReference type="OrthoDB" id="9938362at2759"/>
<dbReference type="PhylomeDB" id="O70142"/>
<dbReference type="TreeFam" id="TF315807"/>
<dbReference type="Reactome" id="R-RNO-167044">
    <property type="pathway name" value="Signalling to RAS"/>
</dbReference>
<dbReference type="Reactome" id="R-RNO-4420097">
    <property type="pathway name" value="VEGFA-VEGFR2 Pathway"/>
</dbReference>
<dbReference type="Reactome" id="R-RNO-5673001">
    <property type="pathway name" value="RAF/MAP kinase cascade"/>
</dbReference>
<dbReference type="PRO" id="PR:O70142"/>
<dbReference type="Proteomes" id="UP000002494">
    <property type="component" value="Chromosome 7"/>
</dbReference>
<dbReference type="Bgee" id="ENSRNOG00000008030">
    <property type="expression patterns" value="Expressed in frontal cortex and 18 other cell types or tissues"/>
</dbReference>
<dbReference type="GO" id="GO:0005886">
    <property type="term" value="C:plasma membrane"/>
    <property type="evidence" value="ECO:0000318"/>
    <property type="project" value="GO_Central"/>
</dbReference>
<dbReference type="GO" id="GO:0030971">
    <property type="term" value="F:receptor tyrosine kinase binding"/>
    <property type="evidence" value="ECO:0000318"/>
    <property type="project" value="GO_Central"/>
</dbReference>
<dbReference type="GO" id="GO:0007169">
    <property type="term" value="P:cell surface receptor protein tyrosine kinase signaling pathway"/>
    <property type="evidence" value="ECO:0000318"/>
    <property type="project" value="GO_Central"/>
</dbReference>
<dbReference type="GO" id="GO:0035556">
    <property type="term" value="P:intracellular signal transduction"/>
    <property type="evidence" value="ECO:0007669"/>
    <property type="project" value="InterPro"/>
</dbReference>
<dbReference type="CDD" id="cd01209">
    <property type="entry name" value="PTB_Shc"/>
    <property type="match status" value="1"/>
</dbReference>
<dbReference type="CDD" id="cd09925">
    <property type="entry name" value="SH2_SHC"/>
    <property type="match status" value="1"/>
</dbReference>
<dbReference type="FunFam" id="2.30.29.30:FF:000036">
    <property type="entry name" value="SHC-transforming protein 1 isoform 3"/>
    <property type="match status" value="1"/>
</dbReference>
<dbReference type="FunFam" id="3.30.505.10:FF:000005">
    <property type="entry name" value="SHC-transforming protein 1 isoform 3"/>
    <property type="match status" value="1"/>
</dbReference>
<dbReference type="Gene3D" id="2.30.29.30">
    <property type="entry name" value="Pleckstrin-homology domain (PH domain)/Phosphotyrosine-binding domain (PTB)"/>
    <property type="match status" value="1"/>
</dbReference>
<dbReference type="Gene3D" id="3.30.505.10">
    <property type="entry name" value="SH2 domain"/>
    <property type="match status" value="1"/>
</dbReference>
<dbReference type="InterPro" id="IPR051235">
    <property type="entry name" value="CEP152/SHC-Transforming"/>
</dbReference>
<dbReference type="InterPro" id="IPR011993">
    <property type="entry name" value="PH-like_dom_sf"/>
</dbReference>
<dbReference type="InterPro" id="IPR006019">
    <property type="entry name" value="PID_Shc-like"/>
</dbReference>
<dbReference type="InterPro" id="IPR006020">
    <property type="entry name" value="PTB/PI_dom"/>
</dbReference>
<dbReference type="InterPro" id="IPR000980">
    <property type="entry name" value="SH2"/>
</dbReference>
<dbReference type="InterPro" id="IPR036860">
    <property type="entry name" value="SH2_dom_sf"/>
</dbReference>
<dbReference type="InterPro" id="IPR035676">
    <property type="entry name" value="SHC_SH2"/>
</dbReference>
<dbReference type="PANTHER" id="PTHR10337">
    <property type="entry name" value="SHC TRANSFORMING PROTEIN"/>
    <property type="match status" value="1"/>
</dbReference>
<dbReference type="PANTHER" id="PTHR10337:SF5">
    <property type="entry name" value="SHC-TRANSFORMING PROTEIN 2"/>
    <property type="match status" value="1"/>
</dbReference>
<dbReference type="Pfam" id="PF00640">
    <property type="entry name" value="PID"/>
    <property type="match status" value="1"/>
</dbReference>
<dbReference type="Pfam" id="PF00017">
    <property type="entry name" value="SH2"/>
    <property type="match status" value="1"/>
</dbReference>
<dbReference type="PRINTS" id="PR00401">
    <property type="entry name" value="SH2DOMAIN"/>
</dbReference>
<dbReference type="PRINTS" id="PR00629">
    <property type="entry name" value="SHCPIDOMAIN"/>
</dbReference>
<dbReference type="SMART" id="SM00462">
    <property type="entry name" value="PTB"/>
    <property type="match status" value="1"/>
</dbReference>
<dbReference type="SMART" id="SM00252">
    <property type="entry name" value="SH2"/>
    <property type="match status" value="1"/>
</dbReference>
<dbReference type="SUPFAM" id="SSF50729">
    <property type="entry name" value="PH domain-like"/>
    <property type="match status" value="1"/>
</dbReference>
<dbReference type="SUPFAM" id="SSF55550">
    <property type="entry name" value="SH2 domain"/>
    <property type="match status" value="1"/>
</dbReference>
<dbReference type="PROSITE" id="PS01179">
    <property type="entry name" value="PID"/>
    <property type="match status" value="1"/>
</dbReference>
<dbReference type="PROSITE" id="PS50001">
    <property type="entry name" value="SH2"/>
    <property type="match status" value="1"/>
</dbReference>
<accession>O70142</accession>
<sequence>MTQGPGGRAAPEPEAPTTFCALLPRMPQWKFAAPGSFLGRGPAAARVAGAAEAQPEPGVPALAAVLGACEPRCAAPCPLPALGRCRGSGSRGARGTPDVADEWVRKGGFIHKPAHGWLHPDARVLGPGVSYIVRYMGCIEVLRSMRSLDFNTRTQVTREAINRLHEAVPGVRGSWKKKAPNKALASILGKSNLRFAGMSISVNISVDGLNLSVPATRQIIANHHMQSISFASGGDTDMTDYVAYVAKDPINQRACHILECCEGLAQSVISTVGQAFELRFKQYLHSPPKAVVPPERLTGLEESAWGDGEVTADHDYYNSIPGKEPPLGGLVDSRLAVTQPCALTTLGGLGQGLSPAWRDVRGLPWDMGPSGAVPPGDGYVQADARGPHDYEEHLYVNTQGLDALELEDTSETPLQPEDSPKKDLFDMRPFEDALKLHECSVAAGITAASLPLEDQWPSPPTRRAPIAPTEEQLRQEPWYHGRMSRRAAEKLLRADGDFLVRDSITNPGQYVLTGMHAGQPKHLLLVDPEGVVRTKDVLFESISHLIDYHLKNGLPIVAAESELHLRGVVSREP</sequence>
<evidence type="ECO:0000250" key="1"/>
<evidence type="ECO:0000255" key="2">
    <source>
        <dbReference type="PROSITE-ProRule" id="PRU00148"/>
    </source>
</evidence>
<evidence type="ECO:0000255" key="3">
    <source>
        <dbReference type="PROSITE-ProRule" id="PRU00191"/>
    </source>
</evidence>
<reference key="1">
    <citation type="journal article" date="2004" name="Nature">
        <title>Genome sequence of the Brown Norway rat yields insights into mammalian evolution.</title>
        <authorList>
            <person name="Gibbs R.A."/>
            <person name="Weinstock G.M."/>
            <person name="Metzker M.L."/>
            <person name="Muzny D.M."/>
            <person name="Sodergren E.J."/>
            <person name="Scherer S."/>
            <person name="Scott G."/>
            <person name="Steffen D."/>
            <person name="Worley K.C."/>
            <person name="Burch P.E."/>
            <person name="Okwuonu G."/>
            <person name="Hines S."/>
            <person name="Lewis L."/>
            <person name="Deramo C."/>
            <person name="Delgado O."/>
            <person name="Dugan-Rocha S."/>
            <person name="Miner G."/>
            <person name="Morgan M."/>
            <person name="Hawes A."/>
            <person name="Gill R."/>
            <person name="Holt R.A."/>
            <person name="Adams M.D."/>
            <person name="Amanatides P.G."/>
            <person name="Baden-Tillson H."/>
            <person name="Barnstead M."/>
            <person name="Chin S."/>
            <person name="Evans C.A."/>
            <person name="Ferriera S."/>
            <person name="Fosler C."/>
            <person name="Glodek A."/>
            <person name="Gu Z."/>
            <person name="Jennings D."/>
            <person name="Kraft C.L."/>
            <person name="Nguyen T."/>
            <person name="Pfannkoch C.M."/>
            <person name="Sitter C."/>
            <person name="Sutton G.G."/>
            <person name="Venter J.C."/>
            <person name="Woodage T."/>
            <person name="Smith D."/>
            <person name="Lee H.-M."/>
            <person name="Gustafson E."/>
            <person name="Cahill P."/>
            <person name="Kana A."/>
            <person name="Doucette-Stamm L."/>
            <person name="Weinstock K."/>
            <person name="Fechtel K."/>
            <person name="Weiss R.B."/>
            <person name="Dunn D.M."/>
            <person name="Green E.D."/>
            <person name="Blakesley R.W."/>
            <person name="Bouffard G.G."/>
            <person name="De Jong P.J."/>
            <person name="Osoegawa K."/>
            <person name="Zhu B."/>
            <person name="Marra M."/>
            <person name="Schein J."/>
            <person name="Bosdet I."/>
            <person name="Fjell C."/>
            <person name="Jones S."/>
            <person name="Krzywinski M."/>
            <person name="Mathewson C."/>
            <person name="Siddiqui A."/>
            <person name="Wye N."/>
            <person name="McPherson J."/>
            <person name="Zhao S."/>
            <person name="Fraser C.M."/>
            <person name="Shetty J."/>
            <person name="Shatsman S."/>
            <person name="Geer K."/>
            <person name="Chen Y."/>
            <person name="Abramzon S."/>
            <person name="Nierman W.C."/>
            <person name="Havlak P.H."/>
            <person name="Chen R."/>
            <person name="Durbin K.J."/>
            <person name="Egan A."/>
            <person name="Ren Y."/>
            <person name="Song X.-Z."/>
            <person name="Li B."/>
            <person name="Liu Y."/>
            <person name="Qin X."/>
            <person name="Cawley S."/>
            <person name="Cooney A.J."/>
            <person name="D'Souza L.M."/>
            <person name="Martin K."/>
            <person name="Wu J.Q."/>
            <person name="Gonzalez-Garay M.L."/>
            <person name="Jackson A.R."/>
            <person name="Kalafus K.J."/>
            <person name="McLeod M.P."/>
            <person name="Milosavljevic A."/>
            <person name="Virk D."/>
            <person name="Volkov A."/>
            <person name="Wheeler D.A."/>
            <person name="Zhang Z."/>
            <person name="Bailey J.A."/>
            <person name="Eichler E.E."/>
            <person name="Tuzun E."/>
            <person name="Birney E."/>
            <person name="Mongin E."/>
            <person name="Ureta-Vidal A."/>
            <person name="Woodwark C."/>
            <person name="Zdobnov E."/>
            <person name="Bork P."/>
            <person name="Suyama M."/>
            <person name="Torrents D."/>
            <person name="Alexandersson M."/>
            <person name="Trask B.J."/>
            <person name="Young J.M."/>
            <person name="Huang H."/>
            <person name="Wang H."/>
            <person name="Xing H."/>
            <person name="Daniels S."/>
            <person name="Gietzen D."/>
            <person name="Schmidt J."/>
            <person name="Stevens K."/>
            <person name="Vitt U."/>
            <person name="Wingrove J."/>
            <person name="Camara F."/>
            <person name="Mar Alba M."/>
            <person name="Abril J.F."/>
            <person name="Guigo R."/>
            <person name="Smit A."/>
            <person name="Dubchak I."/>
            <person name="Rubin E.M."/>
            <person name="Couronne O."/>
            <person name="Poliakov A."/>
            <person name="Huebner N."/>
            <person name="Ganten D."/>
            <person name="Goesele C."/>
            <person name="Hummel O."/>
            <person name="Kreitler T."/>
            <person name="Lee Y.-A."/>
            <person name="Monti J."/>
            <person name="Schulz H."/>
            <person name="Zimdahl H."/>
            <person name="Himmelbauer H."/>
            <person name="Lehrach H."/>
            <person name="Jacob H.J."/>
            <person name="Bromberg S."/>
            <person name="Gullings-Handley J."/>
            <person name="Jensen-Seaman M.I."/>
            <person name="Kwitek A.E."/>
            <person name="Lazar J."/>
            <person name="Pasko D."/>
            <person name="Tonellato P.J."/>
            <person name="Twigger S."/>
            <person name="Ponting C.P."/>
            <person name="Duarte J.M."/>
            <person name="Rice S."/>
            <person name="Goodstadt L."/>
            <person name="Beatson S.A."/>
            <person name="Emes R.D."/>
            <person name="Winter E.E."/>
            <person name="Webber C."/>
            <person name="Brandt P."/>
            <person name="Nyakatura G."/>
            <person name="Adetobi M."/>
            <person name="Chiaromonte F."/>
            <person name="Elnitski L."/>
            <person name="Eswara P."/>
            <person name="Hardison R.C."/>
            <person name="Hou M."/>
            <person name="Kolbe D."/>
            <person name="Makova K."/>
            <person name="Miller W."/>
            <person name="Nekrutenko A."/>
            <person name="Riemer C."/>
            <person name="Schwartz S."/>
            <person name="Taylor J."/>
            <person name="Yang S."/>
            <person name="Zhang Y."/>
            <person name="Lindpaintner K."/>
            <person name="Andrews T.D."/>
            <person name="Caccamo M."/>
            <person name="Clamp M."/>
            <person name="Clarke L."/>
            <person name="Curwen V."/>
            <person name="Durbin R.M."/>
            <person name="Eyras E."/>
            <person name="Searle S.M."/>
            <person name="Cooper G.M."/>
            <person name="Batzoglou S."/>
            <person name="Brudno M."/>
            <person name="Sidow A."/>
            <person name="Stone E.A."/>
            <person name="Payseur B.A."/>
            <person name="Bourque G."/>
            <person name="Lopez-Otin C."/>
            <person name="Puente X.S."/>
            <person name="Chakrabarti K."/>
            <person name="Chatterji S."/>
            <person name="Dewey C."/>
            <person name="Pachter L."/>
            <person name="Bray N."/>
            <person name="Yap V.B."/>
            <person name="Caspi A."/>
            <person name="Tesler G."/>
            <person name="Pevzner P.A."/>
            <person name="Haussler D."/>
            <person name="Roskin K.M."/>
            <person name="Baertsch R."/>
            <person name="Clawson H."/>
            <person name="Furey T.S."/>
            <person name="Hinrichs A.S."/>
            <person name="Karolchik D."/>
            <person name="Kent W.J."/>
            <person name="Rosenbloom K.R."/>
            <person name="Trumbower H."/>
            <person name="Weirauch M."/>
            <person name="Cooper D.N."/>
            <person name="Stenson P.D."/>
            <person name="Ma B."/>
            <person name="Brent M."/>
            <person name="Arumugam M."/>
            <person name="Shteynberg D."/>
            <person name="Copley R.R."/>
            <person name="Taylor M.S."/>
            <person name="Riethman H."/>
            <person name="Mudunuri U."/>
            <person name="Peterson J."/>
            <person name="Guyer M."/>
            <person name="Felsenfeld A."/>
            <person name="Old S."/>
            <person name="Mockrin S."/>
            <person name="Collins F.S."/>
        </authorList>
    </citation>
    <scope>NUCLEOTIDE SEQUENCE [LARGE SCALE GENOMIC DNA]</scope>
    <source>
        <strain>Brown Norway</strain>
    </source>
</reference>
<reference key="2">
    <citation type="journal article" date="1998" name="J. Biol. Chem.">
        <title>N-Shc and Sck, two neuronally expressed Shc adapter homologs. Their differential regional expression in the brain and roles in neurotrophin and Src signaling.</title>
        <authorList>
            <person name="Nakamura T."/>
            <person name="Muraoka S."/>
            <person name="Sanokawa R."/>
            <person name="Mori N."/>
        </authorList>
    </citation>
    <scope>NUCLEOTIDE SEQUENCE [MRNA] OF 97-573</scope>
</reference>
<protein>
    <recommendedName>
        <fullName>SHC-transforming protein 2</fullName>
    </recommendedName>
    <alternativeName>
        <fullName>Protein Sck</fullName>
    </alternativeName>
    <alternativeName>
        <fullName>SH2 domain protein C2</fullName>
    </alternativeName>
    <alternativeName>
        <fullName>Src homology 2 domain-containing-transforming protein C2</fullName>
    </alternativeName>
</protein>